<protein>
    <recommendedName>
        <fullName>Intestinal mucin-like protein</fullName>
        <shortName>MLP</shortName>
    </recommendedName>
</protein>
<name>MUC2L_RAT</name>
<sequence length="837" mass="91500">VNCSVDCQLQVFNWSCPSTPSTPPPSTPTTPTSSQTTTPSTPSTTSSKSTPSTPQSTSSKSTPSTPPKTTLPGCLDFDPPRQVNETWWLCNCTMAICKYDNVVEIVELECNPPPMPTCSNGLKPVRVPDPDGCCWHWECDCYCTGWGDPHFVTFDGLYYSYQGNCTYVLVEEITPTVDNFGVYIDNYHCDANDKVSCPRTLIVHHETQEVLIKTVHMMPIEVEVQVNKQLVALPYKKYGLEVYQSGINFVVDIPRLGAQVSYNGLSFSIRLPYHLFGNNTKGQCGTCTNNTADDCILPSGEIISNCEVAADEWLVNDPSKPHCPHKGLTTKRPAITTPGPFPENCTVSPVCQLIMDSLFSQCHPFVPPKHYYEACLFDSCFVAGSGMECASVQAYAALCAQEGVCIDWRNHTQGACAVTCPAHRQYQACGPSEEPTCQSSSPKNSTLLVEGCFCPEGTTKFAPGYDVCVKICGCVGPDNVPREFGEHFEFDCKDCVCLEGGSGIVCQPKKCARGNLTTCEEDGTYLVVEADPDDKCCNTTSCKCDPKRCKAERPSCLLGFEVKSEHVPGKCCPVYSCVPKGVCVHENAEYQPGSPVYSNKCQDCVCTDSMDNSTQLNVISCTHVPCNISCSSGFELVEVPGECCKKCQQTHCIIKRPEQQYIILKPGEIQKNPNDRCTFFSCMKINNQLISSVSNITCPDFDPSDCVPGSITYMPNGCCKTCIHNPNNTVPCSAIPVMKEISYNGCAKNISMNFCAGSCGTFAMYSAQAQDLDHGCSCCREERTSVRMVSLDCPDGSKLSHSYTHIESCLCQGTVCELPQAQQSRTRRSSPRLLGRK</sequence>
<comment type="subunit">
    <text>Multimeric.</text>
</comment>
<comment type="subcellular location">
    <subcellularLocation>
        <location>Secreted</location>
    </subcellularLocation>
</comment>
<comment type="tissue specificity">
    <text>Coats the epithelia of the intestines.</text>
</comment>
<organism>
    <name type="scientific">Rattus norvegicus</name>
    <name type="common">Rat</name>
    <dbReference type="NCBI Taxonomy" id="10116"/>
    <lineage>
        <taxon>Eukaryota</taxon>
        <taxon>Metazoa</taxon>
        <taxon>Chordata</taxon>
        <taxon>Craniata</taxon>
        <taxon>Vertebrata</taxon>
        <taxon>Euteleostomi</taxon>
        <taxon>Mammalia</taxon>
        <taxon>Eutheria</taxon>
        <taxon>Euarchontoglires</taxon>
        <taxon>Glires</taxon>
        <taxon>Rodentia</taxon>
        <taxon>Myomorpha</taxon>
        <taxon>Muroidea</taxon>
        <taxon>Muridae</taxon>
        <taxon>Murinae</taxon>
        <taxon>Rattus</taxon>
    </lineage>
</organism>
<reference key="1">
    <citation type="journal article" date="1992" name="J. Biol. Chem.">
        <title>cDNA for the carboxyl-terminal region of a rat intestinal mucin-like peptide.</title>
        <authorList>
            <person name="Xu G."/>
            <person name="Huan L.-J."/>
            <person name="Khatri I."/>
            <person name="Wang D."/>
            <person name="Bennick A."/>
            <person name="Fahim R.E.F."/>
            <person name="Forstner G.G."/>
            <person name="Forstner J.F."/>
        </authorList>
    </citation>
    <scope>NUCLEOTIDE SEQUENCE [MRNA]</scope>
    <source>
        <tissue>Intestine</tissue>
    </source>
</reference>
<proteinExistence type="evidence at transcript level"/>
<feature type="chain" id="PRO_0000158959" description="Intestinal mucin-like protein">
    <location>
        <begin position="1" status="less than"/>
        <end position="837"/>
    </location>
</feature>
<feature type="repeat" description="1">
    <location>
        <begin position="17"/>
        <end position="27"/>
    </location>
</feature>
<feature type="repeat" description="2">
    <location>
        <begin position="28"/>
        <end position="38"/>
    </location>
</feature>
<feature type="repeat" description="3">
    <location>
        <begin position="39"/>
        <end position="50"/>
    </location>
</feature>
<feature type="repeat" description="4">
    <location>
        <begin position="51"/>
        <end position="62"/>
    </location>
</feature>
<feature type="repeat" description="5; truncated">
    <location>
        <begin position="63"/>
        <end position="70"/>
    </location>
</feature>
<feature type="domain" description="VWFD" evidence="5">
    <location>
        <begin position="141"/>
        <end position="324"/>
    </location>
</feature>
<feature type="domain" description="VWFC 1" evidence="4">
    <location>
        <begin position="472"/>
        <end position="543"/>
    </location>
</feature>
<feature type="domain" description="VWFC 2" evidence="4">
    <location>
        <begin position="581"/>
        <end position="648"/>
    </location>
</feature>
<feature type="domain" description="CTCK" evidence="3">
    <location>
        <begin position="732"/>
        <end position="817"/>
    </location>
</feature>
<feature type="region of interest" description="Disordered" evidence="6">
    <location>
        <begin position="17"/>
        <end position="75"/>
    </location>
</feature>
<feature type="region of interest" description="5 X 11 AA approximate tandem repeats">
    <location>
        <begin position="17"/>
        <end position="70"/>
    </location>
</feature>
<feature type="region of interest" description="Probably important for disulfide-bond mediated mucin polymerization (link domain)">
    <location>
        <begin position="149"/>
        <end position="837"/>
    </location>
</feature>
<feature type="compositionally biased region" description="Low complexity" evidence="6">
    <location>
        <begin position="29"/>
        <end position="70"/>
    </location>
</feature>
<feature type="glycosylation site" description="N-linked (GlcNAc...) asparagine" evidence="2">
    <location>
        <position position="91"/>
    </location>
</feature>
<feature type="glycosylation site" description="N-linked (GlcNAc...) asparagine" evidence="2">
    <location>
        <position position="164"/>
    </location>
</feature>
<feature type="glycosylation site" description="N-linked (GlcNAc...) asparagine" evidence="2">
    <location>
        <position position="278"/>
    </location>
</feature>
<feature type="glycosylation site" description="N-linked (GlcNAc...) asparagine" evidence="2">
    <location>
        <position position="289"/>
    </location>
</feature>
<feature type="glycosylation site" description="N-linked (GlcNAc...) asparagine" evidence="2">
    <location>
        <position position="344"/>
    </location>
</feature>
<feature type="glycosylation site" description="N-linked (GlcNAc...) asparagine" evidence="2">
    <location>
        <position position="410"/>
    </location>
</feature>
<feature type="glycosylation site" description="N-linked (GlcNAc...) asparagine" evidence="2">
    <location>
        <position position="444"/>
    </location>
</feature>
<feature type="glycosylation site" description="N-linked (GlcNAc...) asparagine" evidence="2">
    <location>
        <position position="515"/>
    </location>
</feature>
<feature type="glycosylation site" description="N-linked (GlcNAc...) asparagine" evidence="2">
    <location>
        <position position="538"/>
    </location>
</feature>
<feature type="glycosylation site" description="N-linked (GlcNAc...) asparagine" evidence="2">
    <location>
        <position position="612"/>
    </location>
</feature>
<feature type="glycosylation site" description="N-linked (GlcNAc...) asparagine" evidence="2">
    <location>
        <position position="627"/>
    </location>
</feature>
<feature type="glycosylation site" description="N-linked (GlcNAc...) asparagine" evidence="2">
    <location>
        <position position="695"/>
    </location>
</feature>
<feature type="glycosylation site" description="N-linked (GlcNAc...) asparagine" evidence="2">
    <location>
        <position position="727"/>
    </location>
</feature>
<feature type="glycosylation site" description="N-linked (GlcNAc...) asparagine" evidence="2">
    <location>
        <position position="749"/>
    </location>
</feature>
<feature type="disulfide bond" evidence="5">
    <location>
        <begin position="143"/>
        <end position="284"/>
    </location>
</feature>
<feature type="disulfide bond" evidence="5">
    <location>
        <begin position="165"/>
        <end position="323"/>
    </location>
</feature>
<feature type="disulfide bond" evidence="5">
    <location>
        <begin position="189"/>
        <end position="197"/>
    </location>
</feature>
<feature type="disulfide bond" evidence="1">
    <location>
        <begin position="732"/>
        <end position="779"/>
    </location>
</feature>
<feature type="disulfide bond" evidence="1">
    <location>
        <begin position="746"/>
        <end position="793"/>
    </location>
</feature>
<feature type="disulfide bond" evidence="1">
    <location>
        <begin position="755"/>
        <end position="809"/>
    </location>
</feature>
<feature type="disulfide bond" evidence="1">
    <location>
        <begin position="759"/>
        <end position="811"/>
    </location>
</feature>
<feature type="disulfide bond" evidence="1">
    <location>
        <begin status="unknown"/>
        <end position="816"/>
    </location>
</feature>
<feature type="non-terminal residue">
    <location>
        <position position="1"/>
    </location>
</feature>
<dbReference type="EMBL" id="M81920">
    <property type="status" value="NOT_ANNOTATED_CDS"/>
    <property type="molecule type" value="mRNA"/>
</dbReference>
<dbReference type="PIR" id="A42112">
    <property type="entry name" value="A42112"/>
</dbReference>
<dbReference type="SMR" id="P98089"/>
<dbReference type="GlyGen" id="P98089">
    <property type="glycosylation" value="18 sites"/>
</dbReference>
<dbReference type="AGR" id="RGD:3123"/>
<dbReference type="RGD" id="1594023">
    <property type="gene designation" value="LOC682824"/>
</dbReference>
<dbReference type="eggNOG" id="KOG1216">
    <property type="taxonomic scope" value="Eukaryota"/>
</dbReference>
<dbReference type="InParanoid" id="P98089"/>
<dbReference type="PhylomeDB" id="P98089"/>
<dbReference type="Proteomes" id="UP000002494">
    <property type="component" value="Unplaced"/>
</dbReference>
<dbReference type="GO" id="GO:0005576">
    <property type="term" value="C:extracellular region"/>
    <property type="evidence" value="ECO:0007669"/>
    <property type="project" value="UniProtKB-SubCell"/>
</dbReference>
<dbReference type="CDD" id="cd19941">
    <property type="entry name" value="TIL"/>
    <property type="match status" value="1"/>
</dbReference>
<dbReference type="Gene3D" id="2.10.90.10">
    <property type="entry name" value="Cystine-knot cytokines"/>
    <property type="match status" value="1"/>
</dbReference>
<dbReference type="Gene3D" id="2.10.25.10">
    <property type="entry name" value="Laminin"/>
    <property type="match status" value="1"/>
</dbReference>
<dbReference type="InterPro" id="IPR006207">
    <property type="entry name" value="Cys_knot_C"/>
</dbReference>
<dbReference type="InterPro" id="IPR029034">
    <property type="entry name" value="Cystine-knot_cytokine"/>
</dbReference>
<dbReference type="InterPro" id="IPR006208">
    <property type="entry name" value="Glyco_hormone_CN"/>
</dbReference>
<dbReference type="InterPro" id="IPR050780">
    <property type="entry name" value="Mucin_vWF_Thrombospondin_sf"/>
</dbReference>
<dbReference type="InterPro" id="IPR036084">
    <property type="entry name" value="Ser_inhib-like_sf"/>
</dbReference>
<dbReference type="InterPro" id="IPR014853">
    <property type="entry name" value="VWF/SSPO/ZAN-like_Cys-rich_dom"/>
</dbReference>
<dbReference type="InterPro" id="IPR001007">
    <property type="entry name" value="VWF_dom"/>
</dbReference>
<dbReference type="InterPro" id="IPR001846">
    <property type="entry name" value="VWF_type-D"/>
</dbReference>
<dbReference type="PANTHER" id="PTHR11339">
    <property type="entry name" value="EXTRACELLULAR MATRIX GLYCOPROTEIN RELATED"/>
    <property type="match status" value="1"/>
</dbReference>
<dbReference type="PANTHER" id="PTHR11339:SF371">
    <property type="entry name" value="MUCIN-2"/>
    <property type="match status" value="1"/>
</dbReference>
<dbReference type="Pfam" id="PF08742">
    <property type="entry name" value="C8"/>
    <property type="match status" value="1"/>
</dbReference>
<dbReference type="Pfam" id="PF00007">
    <property type="entry name" value="Cys_knot"/>
    <property type="match status" value="1"/>
</dbReference>
<dbReference type="Pfam" id="PF00094">
    <property type="entry name" value="VWD"/>
    <property type="match status" value="1"/>
</dbReference>
<dbReference type="SMART" id="SM00832">
    <property type="entry name" value="C8"/>
    <property type="match status" value="1"/>
</dbReference>
<dbReference type="SMART" id="SM00041">
    <property type="entry name" value="CT"/>
    <property type="match status" value="1"/>
</dbReference>
<dbReference type="SMART" id="SM00214">
    <property type="entry name" value="VWC"/>
    <property type="match status" value="2"/>
</dbReference>
<dbReference type="SMART" id="SM00216">
    <property type="entry name" value="VWD"/>
    <property type="match status" value="1"/>
</dbReference>
<dbReference type="SUPFAM" id="SSF57603">
    <property type="entry name" value="FnI-like domain"/>
    <property type="match status" value="1"/>
</dbReference>
<dbReference type="SUPFAM" id="SSF57567">
    <property type="entry name" value="Serine protease inhibitors"/>
    <property type="match status" value="1"/>
</dbReference>
<dbReference type="PROSITE" id="PS01185">
    <property type="entry name" value="CTCK_1"/>
    <property type="match status" value="1"/>
</dbReference>
<dbReference type="PROSITE" id="PS01225">
    <property type="entry name" value="CTCK_2"/>
    <property type="match status" value="1"/>
</dbReference>
<dbReference type="PROSITE" id="PS00022">
    <property type="entry name" value="EGF_1"/>
    <property type="match status" value="1"/>
</dbReference>
<dbReference type="PROSITE" id="PS01208">
    <property type="entry name" value="VWFC_1"/>
    <property type="match status" value="2"/>
</dbReference>
<dbReference type="PROSITE" id="PS50184">
    <property type="entry name" value="VWFC_2"/>
    <property type="match status" value="2"/>
</dbReference>
<dbReference type="PROSITE" id="PS51233">
    <property type="entry name" value="VWFD"/>
    <property type="match status" value="1"/>
</dbReference>
<accession>P98089</accession>
<evidence type="ECO:0000250" key="1"/>
<evidence type="ECO:0000255" key="2"/>
<evidence type="ECO:0000255" key="3">
    <source>
        <dbReference type="PROSITE-ProRule" id="PRU00039"/>
    </source>
</evidence>
<evidence type="ECO:0000255" key="4">
    <source>
        <dbReference type="PROSITE-ProRule" id="PRU00220"/>
    </source>
</evidence>
<evidence type="ECO:0000255" key="5">
    <source>
        <dbReference type="PROSITE-ProRule" id="PRU00580"/>
    </source>
</evidence>
<evidence type="ECO:0000256" key="6">
    <source>
        <dbReference type="SAM" id="MobiDB-lite"/>
    </source>
</evidence>
<keyword id="KW-1015">Disulfide bond</keyword>
<keyword id="KW-0325">Glycoprotein</keyword>
<keyword id="KW-1185">Reference proteome</keyword>
<keyword id="KW-0677">Repeat</keyword>
<keyword id="KW-0964">Secreted</keyword>